<comment type="similarity">
    <text evidence="1">Belongs to the eukaryotic ribosomal protein eL18 family.</text>
</comment>
<proteinExistence type="inferred from homology"/>
<name>RL18E_METJA</name>
<keyword id="KW-1185">Reference proteome</keyword>
<keyword id="KW-0687">Ribonucleoprotein</keyword>
<keyword id="KW-0689">Ribosomal protein</keyword>
<organism>
    <name type="scientific">Methanocaldococcus jannaschii (strain ATCC 43067 / DSM 2661 / JAL-1 / JCM 10045 / NBRC 100440)</name>
    <name type="common">Methanococcus jannaschii</name>
    <dbReference type="NCBI Taxonomy" id="243232"/>
    <lineage>
        <taxon>Archaea</taxon>
        <taxon>Methanobacteriati</taxon>
        <taxon>Methanobacteriota</taxon>
        <taxon>Methanomada group</taxon>
        <taxon>Methanococci</taxon>
        <taxon>Methanococcales</taxon>
        <taxon>Methanocaldococcaceae</taxon>
        <taxon>Methanocaldococcus</taxon>
    </lineage>
</organism>
<feature type="chain" id="PRO_0000132790" description="Large ribosomal subunit protein eL18">
    <location>
        <begin position="1"/>
        <end position="121"/>
    </location>
</feature>
<gene>
    <name evidence="1" type="primary">rpl18e</name>
    <name type="ordered locus">MJ0193</name>
</gene>
<reference key="1">
    <citation type="journal article" date="1996" name="Science">
        <title>Complete genome sequence of the methanogenic archaeon, Methanococcus jannaschii.</title>
        <authorList>
            <person name="Bult C.J."/>
            <person name="White O."/>
            <person name="Olsen G.J."/>
            <person name="Zhou L."/>
            <person name="Fleischmann R.D."/>
            <person name="Sutton G.G."/>
            <person name="Blake J.A."/>
            <person name="FitzGerald L.M."/>
            <person name="Clayton R.A."/>
            <person name="Gocayne J.D."/>
            <person name="Kerlavage A.R."/>
            <person name="Dougherty B.A."/>
            <person name="Tomb J.-F."/>
            <person name="Adams M.D."/>
            <person name="Reich C.I."/>
            <person name="Overbeek R."/>
            <person name="Kirkness E.F."/>
            <person name="Weinstock K.G."/>
            <person name="Merrick J.M."/>
            <person name="Glodek A."/>
            <person name="Scott J.L."/>
            <person name="Geoghagen N.S.M."/>
            <person name="Weidman J.F."/>
            <person name="Fuhrmann J.L."/>
            <person name="Nguyen D."/>
            <person name="Utterback T.R."/>
            <person name="Kelley J.M."/>
            <person name="Peterson J.D."/>
            <person name="Sadow P.W."/>
            <person name="Hanna M.C."/>
            <person name="Cotton M.D."/>
            <person name="Roberts K.M."/>
            <person name="Hurst M.A."/>
            <person name="Kaine B.P."/>
            <person name="Borodovsky M."/>
            <person name="Klenk H.-P."/>
            <person name="Fraser C.M."/>
            <person name="Smith H.O."/>
            <person name="Woese C.R."/>
            <person name="Venter J.C."/>
        </authorList>
    </citation>
    <scope>NUCLEOTIDE SEQUENCE [LARGE SCALE GENOMIC DNA]</scope>
    <source>
        <strain>ATCC 43067 / DSM 2661 / JAL-1 / JCM 10045 / NBRC 100440</strain>
    </source>
</reference>
<accession>P54022</accession>
<protein>
    <recommendedName>
        <fullName evidence="1">Large ribosomal subunit protein eL18</fullName>
    </recommendedName>
    <alternativeName>
        <fullName evidence="2">50S ribosomal protein L18e</fullName>
    </alternativeName>
</protein>
<evidence type="ECO:0000255" key="1">
    <source>
        <dbReference type="HAMAP-Rule" id="MF_00329"/>
    </source>
</evidence>
<evidence type="ECO:0000305" key="2"/>
<sequence length="121" mass="13532">MAKKITATNPRLVKLIEILKQESYKNQAKIWKDIARRLAKPRRRRAEVNLSKINRYTKEGDVVLVPGKVLGAGKLEHKVVVAAFAFSETAKKLIKEAGGEAITIEELIKRNPKGSNVKIMA</sequence>
<dbReference type="EMBL" id="L77117">
    <property type="protein sequence ID" value="AAB98173.1"/>
    <property type="molecule type" value="Genomic_DNA"/>
</dbReference>
<dbReference type="RefSeq" id="WP_010869688.1">
    <property type="nucleotide sequence ID" value="NC_000909.1"/>
</dbReference>
<dbReference type="SMR" id="P54022"/>
<dbReference type="FunCoup" id="P54022">
    <property type="interactions" value="147"/>
</dbReference>
<dbReference type="STRING" id="243232.MJ_0193"/>
<dbReference type="PaxDb" id="243232-MJ_0193"/>
<dbReference type="EnsemblBacteria" id="AAB98173">
    <property type="protein sequence ID" value="AAB98173"/>
    <property type="gene ID" value="MJ_0193"/>
</dbReference>
<dbReference type="GeneID" id="1451041"/>
<dbReference type="KEGG" id="mja:MJ_0193"/>
<dbReference type="eggNOG" id="arCOG00780">
    <property type="taxonomic scope" value="Archaea"/>
</dbReference>
<dbReference type="HOGENOM" id="CLU_146465_0_0_2"/>
<dbReference type="InParanoid" id="P54022"/>
<dbReference type="OrthoDB" id="11309at2157"/>
<dbReference type="PhylomeDB" id="P54022"/>
<dbReference type="Proteomes" id="UP000000805">
    <property type="component" value="Chromosome"/>
</dbReference>
<dbReference type="GO" id="GO:0022625">
    <property type="term" value="C:cytosolic large ribosomal subunit"/>
    <property type="evidence" value="ECO:0000318"/>
    <property type="project" value="GO_Central"/>
</dbReference>
<dbReference type="GO" id="GO:0003723">
    <property type="term" value="F:RNA binding"/>
    <property type="evidence" value="ECO:0000318"/>
    <property type="project" value="GO_Central"/>
</dbReference>
<dbReference type="GO" id="GO:0003735">
    <property type="term" value="F:structural constituent of ribosome"/>
    <property type="evidence" value="ECO:0000318"/>
    <property type="project" value="GO_Central"/>
</dbReference>
<dbReference type="GO" id="GO:0006412">
    <property type="term" value="P:translation"/>
    <property type="evidence" value="ECO:0007669"/>
    <property type="project" value="UniProtKB-UniRule"/>
</dbReference>
<dbReference type="FunFam" id="3.100.10.10:FF:000013">
    <property type="entry name" value="50S ribosomal protein L18e"/>
    <property type="match status" value="1"/>
</dbReference>
<dbReference type="Gene3D" id="3.100.10.10">
    <property type="match status" value="1"/>
</dbReference>
<dbReference type="HAMAP" id="MF_00329">
    <property type="entry name" value="Ribosomal_eL18"/>
    <property type="match status" value="1"/>
</dbReference>
<dbReference type="InterPro" id="IPR000039">
    <property type="entry name" value="Ribosomal_eL18"/>
</dbReference>
<dbReference type="InterPro" id="IPR021132">
    <property type="entry name" value="Ribosomal_eL18/eL18-A/B/_CS"/>
</dbReference>
<dbReference type="InterPro" id="IPR022947">
    <property type="entry name" value="Ribosomal_eL18_arc"/>
</dbReference>
<dbReference type="InterPro" id="IPR021131">
    <property type="entry name" value="Ribosomal_uL15/eL18"/>
</dbReference>
<dbReference type="InterPro" id="IPR036227">
    <property type="entry name" value="Ribosomal_uL15/eL18_sf"/>
</dbReference>
<dbReference type="InterPro" id="IPR001196">
    <property type="entry name" value="Ribosomal_uL15_CS"/>
</dbReference>
<dbReference type="NCBIfam" id="NF003079">
    <property type="entry name" value="PRK04005.1"/>
    <property type="match status" value="1"/>
</dbReference>
<dbReference type="PANTHER" id="PTHR10934">
    <property type="entry name" value="60S RIBOSOMAL PROTEIN L18"/>
    <property type="match status" value="1"/>
</dbReference>
<dbReference type="PANTHER" id="PTHR10934:SF2">
    <property type="entry name" value="LARGE RIBOSOMAL SUBUNIT PROTEIN EL18"/>
    <property type="match status" value="1"/>
</dbReference>
<dbReference type="Pfam" id="PF17135">
    <property type="entry name" value="Ribosomal_L18"/>
    <property type="match status" value="1"/>
</dbReference>
<dbReference type="SUPFAM" id="SSF52080">
    <property type="entry name" value="Ribosomal proteins L15p and L18e"/>
    <property type="match status" value="1"/>
</dbReference>
<dbReference type="PROSITE" id="PS01106">
    <property type="entry name" value="RIBOSOMAL_L18E"/>
    <property type="match status" value="1"/>
</dbReference>